<feature type="signal peptide" evidence="1">
    <location>
        <begin position="1"/>
        <end position="17"/>
    </location>
</feature>
<feature type="chain" id="PRO_0000371802" description="Uncharacterized protein C19D5.02c">
    <location>
        <begin position="18"/>
        <end position="223"/>
    </location>
</feature>
<feature type="transmembrane region" description="Helical" evidence="1">
    <location>
        <begin position="191"/>
        <end position="211"/>
    </location>
</feature>
<feature type="region of interest" description="Disordered" evidence="2">
    <location>
        <begin position="149"/>
        <end position="188"/>
    </location>
</feature>
<feature type="compositionally biased region" description="Basic and acidic residues" evidence="2">
    <location>
        <begin position="159"/>
        <end position="174"/>
    </location>
</feature>
<feature type="compositionally biased region" description="Acidic residues" evidence="2">
    <location>
        <begin position="176"/>
        <end position="187"/>
    </location>
</feature>
<feature type="glycosylation site" description="N-linked (GlcNAc...) asparagine" evidence="1">
    <location>
        <position position="58"/>
    </location>
</feature>
<comment type="subcellular location">
    <subcellularLocation>
        <location evidence="5">Endoplasmic reticulum membrane</location>
        <topology evidence="5">Single-pass membrane protein</topology>
    </subcellularLocation>
    <text evidence="3 4">Localizes to the nuclear rim.</text>
</comment>
<sequence>MLGQGLIFISLAFVAHALEIPISCAVSHNEQTEIFPHGTIDIPEMTFRPSDSQIDWSNLSHSDFVQCGVYEDSTNTWLAGASKYKIDEIKTLPKVPRDHYIILCDSSESNEIAKFTQVVHSFDFSSDSESAVVEQLHPSSPIPILTTAVRKKGSRPSKPQKEKQGNKQGSKTEESPNVDEDELESEPEEKTFFQKYGLYLIPILFLIIMSGNNANQQAANTAK</sequence>
<dbReference type="EMBL" id="CU329670">
    <property type="protein sequence ID" value="CAB16712.1"/>
    <property type="molecule type" value="Genomic_DNA"/>
</dbReference>
<dbReference type="EMBL" id="AB027809">
    <property type="protein sequence ID" value="BAA87113.1"/>
    <property type="molecule type" value="Genomic_DNA"/>
</dbReference>
<dbReference type="PIR" id="T37962">
    <property type="entry name" value="T37962"/>
</dbReference>
<dbReference type="BioGRID" id="278856">
    <property type="interactions" value="12"/>
</dbReference>
<dbReference type="iPTMnet" id="Q1K9B6"/>
<dbReference type="PaxDb" id="4896-SPAC19D5.02c.1"/>
<dbReference type="EnsemblFungi" id="SPAC19D5.02c.1">
    <property type="protein sequence ID" value="SPAC19D5.02c.1:pep"/>
    <property type="gene ID" value="SPAC19D5.02c"/>
</dbReference>
<dbReference type="KEGG" id="spo:2542392"/>
<dbReference type="PomBase" id="SPAC19D5.02c"/>
<dbReference type="VEuPathDB" id="FungiDB:SPAC19D5.02c"/>
<dbReference type="HOGENOM" id="CLU_1138565_0_0_1"/>
<dbReference type="InParanoid" id="Q1K9B6"/>
<dbReference type="OMA" id="SHHAYKD"/>
<dbReference type="PRO" id="PR:Q1K9B6"/>
<dbReference type="Proteomes" id="UP000002485">
    <property type="component" value="Chromosome I"/>
</dbReference>
<dbReference type="GO" id="GO:0072546">
    <property type="term" value="C:EMC complex"/>
    <property type="evidence" value="ECO:0000266"/>
    <property type="project" value="PomBase"/>
</dbReference>
<dbReference type="GO" id="GO:0045048">
    <property type="term" value="P:protein insertion into ER membrane"/>
    <property type="evidence" value="ECO:0000305"/>
    <property type="project" value="PomBase"/>
</dbReference>
<dbReference type="Pfam" id="PF21203">
    <property type="entry name" value="ECM10"/>
    <property type="match status" value="1"/>
</dbReference>
<proteinExistence type="inferred from homology"/>
<accession>Q1K9B6</accession>
<accession>O13832</accession>
<accession>Q9USF0</accession>
<gene>
    <name type="ORF">SPAC19D5.02c</name>
</gene>
<organism>
    <name type="scientific">Schizosaccharomyces pombe (strain 972 / ATCC 24843)</name>
    <name type="common">Fission yeast</name>
    <dbReference type="NCBI Taxonomy" id="284812"/>
    <lineage>
        <taxon>Eukaryota</taxon>
        <taxon>Fungi</taxon>
        <taxon>Dikarya</taxon>
        <taxon>Ascomycota</taxon>
        <taxon>Taphrinomycotina</taxon>
        <taxon>Schizosaccharomycetes</taxon>
        <taxon>Schizosaccharomycetales</taxon>
        <taxon>Schizosaccharomycetaceae</taxon>
        <taxon>Schizosaccharomyces</taxon>
    </lineage>
</organism>
<keyword id="KW-0256">Endoplasmic reticulum</keyword>
<keyword id="KW-0325">Glycoprotein</keyword>
<keyword id="KW-0472">Membrane</keyword>
<keyword id="KW-1185">Reference proteome</keyword>
<keyword id="KW-0732">Signal</keyword>
<keyword id="KW-0812">Transmembrane</keyword>
<keyword id="KW-1133">Transmembrane helix</keyword>
<evidence type="ECO:0000255" key="1"/>
<evidence type="ECO:0000256" key="2">
    <source>
        <dbReference type="SAM" id="MobiDB-lite"/>
    </source>
</evidence>
<evidence type="ECO:0000269" key="3">
    <source>
    </source>
</evidence>
<evidence type="ECO:0000269" key="4">
    <source>
    </source>
</evidence>
<evidence type="ECO:0000305" key="5"/>
<reference key="1">
    <citation type="journal article" date="2002" name="Nature">
        <title>The genome sequence of Schizosaccharomyces pombe.</title>
        <authorList>
            <person name="Wood V."/>
            <person name="Gwilliam R."/>
            <person name="Rajandream M.A."/>
            <person name="Lyne M.H."/>
            <person name="Lyne R."/>
            <person name="Stewart A."/>
            <person name="Sgouros J.G."/>
            <person name="Peat N."/>
            <person name="Hayles J."/>
            <person name="Baker S.G."/>
            <person name="Basham D."/>
            <person name="Bowman S."/>
            <person name="Brooks K."/>
            <person name="Brown D."/>
            <person name="Brown S."/>
            <person name="Chillingworth T."/>
            <person name="Churcher C.M."/>
            <person name="Collins M."/>
            <person name="Connor R."/>
            <person name="Cronin A."/>
            <person name="Davis P."/>
            <person name="Feltwell T."/>
            <person name="Fraser A."/>
            <person name="Gentles S."/>
            <person name="Goble A."/>
            <person name="Hamlin N."/>
            <person name="Harris D.E."/>
            <person name="Hidalgo J."/>
            <person name="Hodgson G."/>
            <person name="Holroyd S."/>
            <person name="Hornsby T."/>
            <person name="Howarth S."/>
            <person name="Huckle E.J."/>
            <person name="Hunt S."/>
            <person name="Jagels K."/>
            <person name="James K.D."/>
            <person name="Jones L."/>
            <person name="Jones M."/>
            <person name="Leather S."/>
            <person name="McDonald S."/>
            <person name="McLean J."/>
            <person name="Mooney P."/>
            <person name="Moule S."/>
            <person name="Mungall K.L."/>
            <person name="Murphy L.D."/>
            <person name="Niblett D."/>
            <person name="Odell C."/>
            <person name="Oliver K."/>
            <person name="O'Neil S."/>
            <person name="Pearson D."/>
            <person name="Quail M.A."/>
            <person name="Rabbinowitsch E."/>
            <person name="Rutherford K.M."/>
            <person name="Rutter S."/>
            <person name="Saunders D."/>
            <person name="Seeger K."/>
            <person name="Sharp S."/>
            <person name="Skelton J."/>
            <person name="Simmonds M.N."/>
            <person name="Squares R."/>
            <person name="Squares S."/>
            <person name="Stevens K."/>
            <person name="Taylor K."/>
            <person name="Taylor R.G."/>
            <person name="Tivey A."/>
            <person name="Walsh S.V."/>
            <person name="Warren T."/>
            <person name="Whitehead S."/>
            <person name="Woodward J.R."/>
            <person name="Volckaert G."/>
            <person name="Aert R."/>
            <person name="Robben J."/>
            <person name="Grymonprez B."/>
            <person name="Weltjens I."/>
            <person name="Vanstreels E."/>
            <person name="Rieger M."/>
            <person name="Schaefer M."/>
            <person name="Mueller-Auer S."/>
            <person name="Gabel C."/>
            <person name="Fuchs M."/>
            <person name="Duesterhoeft A."/>
            <person name="Fritzc C."/>
            <person name="Holzer E."/>
            <person name="Moestl D."/>
            <person name="Hilbert H."/>
            <person name="Borzym K."/>
            <person name="Langer I."/>
            <person name="Beck A."/>
            <person name="Lehrach H."/>
            <person name="Reinhardt R."/>
            <person name="Pohl T.M."/>
            <person name="Eger P."/>
            <person name="Zimmermann W."/>
            <person name="Wedler H."/>
            <person name="Wambutt R."/>
            <person name="Purnelle B."/>
            <person name="Goffeau A."/>
            <person name="Cadieu E."/>
            <person name="Dreano S."/>
            <person name="Gloux S."/>
            <person name="Lelaure V."/>
            <person name="Mottier S."/>
            <person name="Galibert F."/>
            <person name="Aves S.J."/>
            <person name="Xiang Z."/>
            <person name="Hunt C."/>
            <person name="Moore K."/>
            <person name="Hurst S.M."/>
            <person name="Lucas M."/>
            <person name="Rochet M."/>
            <person name="Gaillardin C."/>
            <person name="Tallada V.A."/>
            <person name="Garzon A."/>
            <person name="Thode G."/>
            <person name="Daga R.R."/>
            <person name="Cruzado L."/>
            <person name="Jimenez J."/>
            <person name="Sanchez M."/>
            <person name="del Rey F."/>
            <person name="Benito J."/>
            <person name="Dominguez A."/>
            <person name="Revuelta J.L."/>
            <person name="Moreno S."/>
            <person name="Armstrong J."/>
            <person name="Forsburg S.L."/>
            <person name="Cerutti L."/>
            <person name="Lowe T."/>
            <person name="McCombie W.R."/>
            <person name="Paulsen I."/>
            <person name="Potashkin J."/>
            <person name="Shpakovski G.V."/>
            <person name="Ussery D."/>
            <person name="Barrell B.G."/>
            <person name="Nurse P."/>
        </authorList>
    </citation>
    <scope>NUCLEOTIDE SEQUENCE [LARGE SCALE GENOMIC DNA]</scope>
    <source>
        <strain>972 / ATCC 24843</strain>
    </source>
</reference>
<reference key="2">
    <citation type="journal article" date="2000" name="Genes Cells">
        <title>Large-scale screening of intracellular protein localization in living fission yeast cells by the use of a GFP-fusion genomic DNA library.</title>
        <authorList>
            <person name="Ding D.-Q."/>
            <person name="Tomita Y."/>
            <person name="Yamamoto A."/>
            <person name="Chikashige Y."/>
            <person name="Haraguchi T."/>
            <person name="Hiraoka Y."/>
        </authorList>
    </citation>
    <scope>NUCLEOTIDE SEQUENCE [LARGE SCALE GENOMIC DNA] OF 1-154</scope>
    <scope>SUBCELLULAR LOCATION</scope>
    <source>
        <strain>ATCC 38364 / 968</strain>
    </source>
</reference>
<reference key="3">
    <citation type="journal article" date="2006" name="Nat. Biotechnol.">
        <title>ORFeome cloning and global analysis of protein localization in the fission yeast Schizosaccharomyces pombe.</title>
        <authorList>
            <person name="Matsuyama A."/>
            <person name="Arai R."/>
            <person name="Yashiroda Y."/>
            <person name="Shirai A."/>
            <person name="Kamata A."/>
            <person name="Sekido S."/>
            <person name="Kobayashi Y."/>
            <person name="Hashimoto A."/>
            <person name="Hamamoto M."/>
            <person name="Hiraoka Y."/>
            <person name="Horinouchi S."/>
            <person name="Yoshida M."/>
        </authorList>
    </citation>
    <scope>SUBCELLULAR LOCATION [LARGE SCALE ANALYSIS]</scope>
</reference>
<name>YFS2_SCHPO</name>
<protein>
    <recommendedName>
        <fullName>Uncharacterized protein C19D5.02c</fullName>
    </recommendedName>
</protein>